<organism>
    <name type="scientific">Corynebacterium glutamicum (strain R)</name>
    <dbReference type="NCBI Taxonomy" id="340322"/>
    <lineage>
        <taxon>Bacteria</taxon>
        <taxon>Bacillati</taxon>
        <taxon>Actinomycetota</taxon>
        <taxon>Actinomycetes</taxon>
        <taxon>Mycobacteriales</taxon>
        <taxon>Corynebacteriaceae</taxon>
        <taxon>Corynebacterium</taxon>
    </lineage>
</organism>
<feature type="chain" id="PRO_1000026503" description="L-lactate dehydrogenase">
    <location>
        <begin position="1"/>
        <end position="314"/>
    </location>
</feature>
<feature type="active site" description="Proton acceptor" evidence="1">
    <location>
        <position position="179"/>
    </location>
</feature>
<feature type="binding site" evidence="1">
    <location>
        <position position="17"/>
    </location>
    <ligand>
        <name>NAD(+)</name>
        <dbReference type="ChEBI" id="CHEBI:57540"/>
    </ligand>
</feature>
<feature type="binding site" evidence="1">
    <location>
        <position position="38"/>
    </location>
    <ligand>
        <name>NAD(+)</name>
        <dbReference type="ChEBI" id="CHEBI:57540"/>
    </ligand>
</feature>
<feature type="binding site" evidence="1">
    <location>
        <position position="43"/>
    </location>
    <ligand>
        <name>NAD(+)</name>
        <dbReference type="ChEBI" id="CHEBI:57540"/>
    </ligand>
</feature>
<feature type="binding site" evidence="1">
    <location>
        <position position="69"/>
    </location>
    <ligand>
        <name>NAD(+)</name>
        <dbReference type="ChEBI" id="CHEBI:57540"/>
    </ligand>
</feature>
<feature type="binding site" evidence="1">
    <location>
        <begin position="83"/>
        <end position="84"/>
    </location>
    <ligand>
        <name>NAD(+)</name>
        <dbReference type="ChEBI" id="CHEBI:57540"/>
    </ligand>
</feature>
<feature type="binding site" evidence="1">
    <location>
        <position position="86"/>
    </location>
    <ligand>
        <name>substrate</name>
    </ligand>
</feature>
<feature type="binding site" evidence="1">
    <location>
        <position position="92"/>
    </location>
    <ligand>
        <name>substrate</name>
    </ligand>
</feature>
<feature type="binding site" evidence="1">
    <location>
        <position position="105"/>
    </location>
    <ligand>
        <name>NAD(+)</name>
        <dbReference type="ChEBI" id="CHEBI:57540"/>
    </ligand>
</feature>
<feature type="binding site" evidence="1">
    <location>
        <begin position="122"/>
        <end position="124"/>
    </location>
    <ligand>
        <name>NAD(+)</name>
        <dbReference type="ChEBI" id="CHEBI:57540"/>
    </ligand>
</feature>
<feature type="binding site" evidence="1">
    <location>
        <begin position="124"/>
        <end position="127"/>
    </location>
    <ligand>
        <name>substrate</name>
    </ligand>
</feature>
<feature type="binding site" evidence="1">
    <location>
        <position position="147"/>
    </location>
    <ligand>
        <name>NAD(+)</name>
        <dbReference type="ChEBI" id="CHEBI:57540"/>
    </ligand>
</feature>
<feature type="binding site" evidence="1">
    <location>
        <begin position="152"/>
        <end position="155"/>
    </location>
    <ligand>
        <name>substrate</name>
    </ligand>
</feature>
<feature type="binding site" evidence="1">
    <location>
        <position position="157"/>
    </location>
    <ligand>
        <name>beta-D-fructose 1,6-bisphosphate</name>
        <dbReference type="ChEBI" id="CHEBI:32966"/>
        <note>allosteric activator</note>
    </ligand>
</feature>
<feature type="binding site" evidence="1">
    <location>
        <position position="172"/>
    </location>
    <ligand>
        <name>beta-D-fructose 1,6-bisphosphate</name>
        <dbReference type="ChEBI" id="CHEBI:32966"/>
        <note>allosteric activator</note>
    </ligand>
</feature>
<feature type="binding site" evidence="1">
    <location>
        <position position="232"/>
    </location>
    <ligand>
        <name>substrate</name>
    </ligand>
</feature>
<feature type="modified residue" description="Phosphotyrosine" evidence="1">
    <location>
        <position position="223"/>
    </location>
</feature>
<keyword id="KW-0021">Allosteric enzyme</keyword>
<keyword id="KW-0963">Cytoplasm</keyword>
<keyword id="KW-0520">NAD</keyword>
<keyword id="KW-0560">Oxidoreductase</keyword>
<keyword id="KW-0597">Phosphoprotein</keyword>
<proteinExistence type="inferred from homology"/>
<name>LDH_CORGB</name>
<reference key="1">
    <citation type="journal article" date="2007" name="Microbiology">
        <title>Comparative analysis of the Corynebacterium glutamicum group and complete genome sequence of strain R.</title>
        <authorList>
            <person name="Yukawa H."/>
            <person name="Omumasaba C.A."/>
            <person name="Nonaka H."/>
            <person name="Kos P."/>
            <person name="Okai N."/>
            <person name="Suzuki N."/>
            <person name="Suda M."/>
            <person name="Tsuge Y."/>
            <person name="Watanabe J."/>
            <person name="Ikeda Y."/>
            <person name="Vertes A.A."/>
            <person name="Inui M."/>
        </authorList>
    </citation>
    <scope>NUCLEOTIDE SEQUENCE [LARGE SCALE GENOMIC DNA]</scope>
    <source>
        <strain>R</strain>
    </source>
</reference>
<sequence length="314" mass="34361">MKETVGNKIVLIGAGDVGVAYAYALINQGMADHLAIIDIDEKKLEGNVMDLNHGVVWADSRTRVTKGTYADCEDAAMVVICAGAAQKPGETRLQLVDKNVKIMKSIVGDVMASGFDGIFLVASNPVDILTYAVWKFSGLEWNRVIGSGTVLDSARFRYMLGELYEVAPSSVHAYIIGEHGDTELPVLSSATIAGVSLSRMLDKDPELEGRLEKIFEDTRDAAYHIIDAKGSTSYGIGMGLARITRAILQNQDVAVPVSALLHGEYGEEDIYIGTPAVVNRRGIRRVVELEITDHEMERFKHSANTLREIQKQFF</sequence>
<dbReference type="EC" id="1.1.1.27" evidence="1"/>
<dbReference type="EMBL" id="AP009044">
    <property type="protein sequence ID" value="BAF55831.1"/>
    <property type="molecule type" value="Genomic_DNA"/>
</dbReference>
<dbReference type="RefSeq" id="WP_003857765.1">
    <property type="nucleotide sequence ID" value="NC_009342.1"/>
</dbReference>
<dbReference type="SMR" id="A4QHW5"/>
<dbReference type="KEGG" id="cgt:cgR_2812"/>
<dbReference type="HOGENOM" id="CLU_045401_1_1_11"/>
<dbReference type="PhylomeDB" id="A4QHW5"/>
<dbReference type="UniPathway" id="UPA00554">
    <property type="reaction ID" value="UER00611"/>
</dbReference>
<dbReference type="Proteomes" id="UP000006698">
    <property type="component" value="Chromosome"/>
</dbReference>
<dbReference type="GO" id="GO:0005737">
    <property type="term" value="C:cytoplasm"/>
    <property type="evidence" value="ECO:0007669"/>
    <property type="project" value="UniProtKB-SubCell"/>
</dbReference>
<dbReference type="GO" id="GO:0004459">
    <property type="term" value="F:L-lactate dehydrogenase activity"/>
    <property type="evidence" value="ECO:0007669"/>
    <property type="project" value="UniProtKB-UniRule"/>
</dbReference>
<dbReference type="GO" id="GO:0006096">
    <property type="term" value="P:glycolytic process"/>
    <property type="evidence" value="ECO:0007669"/>
    <property type="project" value="UniProtKB-UniRule"/>
</dbReference>
<dbReference type="GO" id="GO:0006089">
    <property type="term" value="P:lactate metabolic process"/>
    <property type="evidence" value="ECO:0007669"/>
    <property type="project" value="TreeGrafter"/>
</dbReference>
<dbReference type="CDD" id="cd05291">
    <property type="entry name" value="HicDH_like"/>
    <property type="match status" value="1"/>
</dbReference>
<dbReference type="FunFam" id="3.40.50.720:FF:000018">
    <property type="entry name" value="Malate dehydrogenase"/>
    <property type="match status" value="1"/>
</dbReference>
<dbReference type="Gene3D" id="3.90.110.10">
    <property type="entry name" value="Lactate dehydrogenase/glycoside hydrolase, family 4, C-terminal"/>
    <property type="match status" value="1"/>
</dbReference>
<dbReference type="Gene3D" id="3.40.50.720">
    <property type="entry name" value="NAD(P)-binding Rossmann-like Domain"/>
    <property type="match status" value="1"/>
</dbReference>
<dbReference type="HAMAP" id="MF_00488">
    <property type="entry name" value="Lactate_dehydrog"/>
    <property type="match status" value="1"/>
</dbReference>
<dbReference type="InterPro" id="IPR001557">
    <property type="entry name" value="L-lactate/malate_DH"/>
</dbReference>
<dbReference type="InterPro" id="IPR011304">
    <property type="entry name" value="L-lactate_DH"/>
</dbReference>
<dbReference type="InterPro" id="IPR018177">
    <property type="entry name" value="L-lactate_DH_AS"/>
</dbReference>
<dbReference type="InterPro" id="IPR022383">
    <property type="entry name" value="Lactate/malate_DH_C"/>
</dbReference>
<dbReference type="InterPro" id="IPR001236">
    <property type="entry name" value="Lactate/malate_DH_N"/>
</dbReference>
<dbReference type="InterPro" id="IPR015955">
    <property type="entry name" value="Lactate_DH/Glyco_Ohase_4_C"/>
</dbReference>
<dbReference type="InterPro" id="IPR036291">
    <property type="entry name" value="NAD(P)-bd_dom_sf"/>
</dbReference>
<dbReference type="NCBIfam" id="TIGR01771">
    <property type="entry name" value="L-LDH-NAD"/>
    <property type="match status" value="1"/>
</dbReference>
<dbReference type="NCBIfam" id="NF000824">
    <property type="entry name" value="PRK00066.1"/>
    <property type="match status" value="1"/>
</dbReference>
<dbReference type="PANTHER" id="PTHR43128">
    <property type="entry name" value="L-2-HYDROXYCARBOXYLATE DEHYDROGENASE (NAD(P)(+))"/>
    <property type="match status" value="1"/>
</dbReference>
<dbReference type="PANTHER" id="PTHR43128:SF16">
    <property type="entry name" value="L-LACTATE DEHYDROGENASE"/>
    <property type="match status" value="1"/>
</dbReference>
<dbReference type="Pfam" id="PF02866">
    <property type="entry name" value="Ldh_1_C"/>
    <property type="match status" value="1"/>
</dbReference>
<dbReference type="Pfam" id="PF00056">
    <property type="entry name" value="Ldh_1_N"/>
    <property type="match status" value="1"/>
</dbReference>
<dbReference type="PIRSF" id="PIRSF000102">
    <property type="entry name" value="Lac_mal_DH"/>
    <property type="match status" value="1"/>
</dbReference>
<dbReference type="PRINTS" id="PR00086">
    <property type="entry name" value="LLDHDRGNASE"/>
</dbReference>
<dbReference type="SUPFAM" id="SSF56327">
    <property type="entry name" value="LDH C-terminal domain-like"/>
    <property type="match status" value="1"/>
</dbReference>
<dbReference type="SUPFAM" id="SSF51735">
    <property type="entry name" value="NAD(P)-binding Rossmann-fold domains"/>
    <property type="match status" value="1"/>
</dbReference>
<dbReference type="PROSITE" id="PS00064">
    <property type="entry name" value="L_LDH"/>
    <property type="match status" value="1"/>
</dbReference>
<gene>
    <name evidence="1" type="primary">ldh</name>
    <name type="ordered locus">cgR_2812</name>
</gene>
<comment type="function">
    <text evidence="1">Catalyzes the conversion of lactate to pyruvate.</text>
</comment>
<comment type="catalytic activity">
    <reaction evidence="1">
        <text>(S)-lactate + NAD(+) = pyruvate + NADH + H(+)</text>
        <dbReference type="Rhea" id="RHEA:23444"/>
        <dbReference type="ChEBI" id="CHEBI:15361"/>
        <dbReference type="ChEBI" id="CHEBI:15378"/>
        <dbReference type="ChEBI" id="CHEBI:16651"/>
        <dbReference type="ChEBI" id="CHEBI:57540"/>
        <dbReference type="ChEBI" id="CHEBI:57945"/>
        <dbReference type="EC" id="1.1.1.27"/>
    </reaction>
</comment>
<comment type="activity regulation">
    <text evidence="1">Allosterically activated by fructose 1,6-bisphosphate (FBP).</text>
</comment>
<comment type="pathway">
    <text evidence="1">Fermentation; pyruvate fermentation to lactate; (S)-lactate from pyruvate: step 1/1.</text>
</comment>
<comment type="subunit">
    <text evidence="1">Homotetramer.</text>
</comment>
<comment type="subcellular location">
    <subcellularLocation>
        <location evidence="1">Cytoplasm</location>
    </subcellularLocation>
</comment>
<comment type="similarity">
    <text evidence="1">Belongs to the LDH/MDH superfamily. LDH family.</text>
</comment>
<protein>
    <recommendedName>
        <fullName evidence="1">L-lactate dehydrogenase</fullName>
        <shortName evidence="1">L-LDH</shortName>
        <ecNumber evidence="1">1.1.1.27</ecNumber>
    </recommendedName>
</protein>
<evidence type="ECO:0000255" key="1">
    <source>
        <dbReference type="HAMAP-Rule" id="MF_00488"/>
    </source>
</evidence>
<accession>A4QHW5</accession>